<sequence>MDKFRWHPEFDFSKVRIRYIDRPKGYSEVSGDDIKEIGHMFIYLYSGAAIPHHRIVEIRYGEEVVWRRP</sequence>
<accession>O29827</accession>
<gene>
    <name type="ordered locus">AF_0420</name>
</gene>
<evidence type="ECO:0000255" key="1">
    <source>
        <dbReference type="HAMAP-Rule" id="MF_01245"/>
    </source>
</evidence>
<proteinExistence type="inferred from homology"/>
<dbReference type="EMBL" id="AE000782">
    <property type="protein sequence ID" value="AAB90818.1"/>
    <property type="molecule type" value="Genomic_DNA"/>
</dbReference>
<dbReference type="PIR" id="D69302">
    <property type="entry name" value="D69302"/>
</dbReference>
<dbReference type="STRING" id="224325.AF_0420"/>
<dbReference type="PaxDb" id="224325-AF_0420"/>
<dbReference type="EnsemblBacteria" id="AAB90818">
    <property type="protein sequence ID" value="AAB90818"/>
    <property type="gene ID" value="AF_0420"/>
</dbReference>
<dbReference type="KEGG" id="afu:AF_0420"/>
<dbReference type="eggNOG" id="arCOG01302">
    <property type="taxonomic scope" value="Archaea"/>
</dbReference>
<dbReference type="HOGENOM" id="CLU_172276_2_0_2"/>
<dbReference type="OrthoDB" id="14794at2157"/>
<dbReference type="Proteomes" id="UP000002199">
    <property type="component" value="Chromosome"/>
</dbReference>
<dbReference type="HAMAP" id="MF_01245">
    <property type="entry name" value="UPF0248"/>
    <property type="match status" value="1"/>
</dbReference>
<dbReference type="InterPro" id="IPR040459">
    <property type="entry name" value="MJ1316"/>
</dbReference>
<dbReference type="InterPro" id="IPR007547">
    <property type="entry name" value="UPF0248"/>
</dbReference>
<dbReference type="Pfam" id="PF04457">
    <property type="entry name" value="MJ1316"/>
    <property type="match status" value="1"/>
</dbReference>
<reference key="1">
    <citation type="journal article" date="1997" name="Nature">
        <title>The complete genome sequence of the hyperthermophilic, sulphate-reducing archaeon Archaeoglobus fulgidus.</title>
        <authorList>
            <person name="Klenk H.-P."/>
            <person name="Clayton R.A."/>
            <person name="Tomb J.-F."/>
            <person name="White O."/>
            <person name="Nelson K.E."/>
            <person name="Ketchum K.A."/>
            <person name="Dodson R.J."/>
            <person name="Gwinn M.L."/>
            <person name="Hickey E.K."/>
            <person name="Peterson J.D."/>
            <person name="Richardson D.L."/>
            <person name="Kerlavage A.R."/>
            <person name="Graham D.E."/>
            <person name="Kyrpides N.C."/>
            <person name="Fleischmann R.D."/>
            <person name="Quackenbush J."/>
            <person name="Lee N.H."/>
            <person name="Sutton G.G."/>
            <person name="Gill S.R."/>
            <person name="Kirkness E.F."/>
            <person name="Dougherty B.A."/>
            <person name="McKenney K."/>
            <person name="Adams M.D."/>
            <person name="Loftus B.J."/>
            <person name="Peterson S.N."/>
            <person name="Reich C.I."/>
            <person name="McNeil L.K."/>
            <person name="Badger J.H."/>
            <person name="Glodek A."/>
            <person name="Zhou L."/>
            <person name="Overbeek R."/>
            <person name="Gocayne J.D."/>
            <person name="Weidman J.F."/>
            <person name="McDonald L.A."/>
            <person name="Utterback T.R."/>
            <person name="Cotton M.D."/>
            <person name="Spriggs T."/>
            <person name="Artiach P."/>
            <person name="Kaine B.P."/>
            <person name="Sykes S.M."/>
            <person name="Sadow P.W."/>
            <person name="D'Andrea K.P."/>
            <person name="Bowman C."/>
            <person name="Fujii C."/>
            <person name="Garland S.A."/>
            <person name="Mason T.M."/>
            <person name="Olsen G.J."/>
            <person name="Fraser C.M."/>
            <person name="Smith H.O."/>
            <person name="Woese C.R."/>
            <person name="Venter J.C."/>
        </authorList>
    </citation>
    <scope>NUCLEOTIDE SEQUENCE [LARGE SCALE GENOMIC DNA]</scope>
    <source>
        <strain>ATCC 49558 / DSM 4304 / JCM 9628 / NBRC 100126 / VC-16</strain>
    </source>
</reference>
<keyword id="KW-1185">Reference proteome</keyword>
<comment type="similarity">
    <text evidence="1">Belongs to the UPF0248 family.</text>
</comment>
<feature type="chain" id="PRO_0000053411" description="UPF0248 protein AF_0420">
    <location>
        <begin position="1"/>
        <end position="69"/>
    </location>
</feature>
<organism>
    <name type="scientific">Archaeoglobus fulgidus (strain ATCC 49558 / DSM 4304 / JCM 9628 / NBRC 100126 / VC-16)</name>
    <dbReference type="NCBI Taxonomy" id="224325"/>
    <lineage>
        <taxon>Archaea</taxon>
        <taxon>Methanobacteriati</taxon>
        <taxon>Methanobacteriota</taxon>
        <taxon>Archaeoglobi</taxon>
        <taxon>Archaeoglobales</taxon>
        <taxon>Archaeoglobaceae</taxon>
        <taxon>Archaeoglobus</taxon>
    </lineage>
</organism>
<name>Y420_ARCFU</name>
<protein>
    <recommendedName>
        <fullName evidence="1">UPF0248 protein AF_0420</fullName>
    </recommendedName>
</protein>